<accession>B2UXU6</accession>
<protein>
    <recommendedName>
        <fullName evidence="1">Type III pantothenate kinase</fullName>
        <ecNumber evidence="1">2.7.1.33</ecNumber>
    </recommendedName>
    <alternativeName>
        <fullName evidence="1">PanK-III</fullName>
    </alternativeName>
    <alternativeName>
        <fullName evidence="1">Pantothenic acid kinase</fullName>
    </alternativeName>
</protein>
<keyword id="KW-0067">ATP-binding</keyword>
<keyword id="KW-0173">Coenzyme A biosynthesis</keyword>
<keyword id="KW-0963">Cytoplasm</keyword>
<keyword id="KW-0418">Kinase</keyword>
<keyword id="KW-0479">Metal-binding</keyword>
<keyword id="KW-0547">Nucleotide-binding</keyword>
<keyword id="KW-0630">Potassium</keyword>
<keyword id="KW-0808">Transferase</keyword>
<comment type="function">
    <text evidence="1">Catalyzes the phosphorylation of pantothenate (Pan), the first step in CoA biosynthesis.</text>
</comment>
<comment type="catalytic activity">
    <reaction evidence="1">
        <text>(R)-pantothenate + ATP = (R)-4'-phosphopantothenate + ADP + H(+)</text>
        <dbReference type="Rhea" id="RHEA:16373"/>
        <dbReference type="ChEBI" id="CHEBI:10986"/>
        <dbReference type="ChEBI" id="CHEBI:15378"/>
        <dbReference type="ChEBI" id="CHEBI:29032"/>
        <dbReference type="ChEBI" id="CHEBI:30616"/>
        <dbReference type="ChEBI" id="CHEBI:456216"/>
        <dbReference type="EC" id="2.7.1.33"/>
    </reaction>
</comment>
<comment type="cofactor">
    <cofactor evidence="1">
        <name>NH4(+)</name>
        <dbReference type="ChEBI" id="CHEBI:28938"/>
    </cofactor>
    <cofactor evidence="1">
        <name>K(+)</name>
        <dbReference type="ChEBI" id="CHEBI:29103"/>
    </cofactor>
    <text evidence="1">A monovalent cation. Ammonium or potassium.</text>
</comment>
<comment type="pathway">
    <text evidence="1">Cofactor biosynthesis; coenzyme A biosynthesis; CoA from (R)-pantothenate: step 1/5.</text>
</comment>
<comment type="subunit">
    <text evidence="1">Homodimer.</text>
</comment>
<comment type="subcellular location">
    <subcellularLocation>
        <location evidence="1">Cytoplasm</location>
    </subcellularLocation>
</comment>
<comment type="similarity">
    <text evidence="1">Belongs to the type III pantothenate kinase family.</text>
</comment>
<dbReference type="EC" id="2.7.1.33" evidence="1"/>
<dbReference type="EMBL" id="CP001078">
    <property type="protein sequence ID" value="ACD53722.1"/>
    <property type="molecule type" value="Genomic_DNA"/>
</dbReference>
<dbReference type="RefSeq" id="WP_012451569.1">
    <property type="nucleotide sequence ID" value="NC_010723.1"/>
</dbReference>
<dbReference type="SMR" id="B2UXU6"/>
<dbReference type="KEGG" id="cbt:CLH_0167"/>
<dbReference type="HOGENOM" id="CLU_066627_1_0_9"/>
<dbReference type="UniPathway" id="UPA00241">
    <property type="reaction ID" value="UER00352"/>
</dbReference>
<dbReference type="GO" id="GO:0005737">
    <property type="term" value="C:cytoplasm"/>
    <property type="evidence" value="ECO:0007669"/>
    <property type="project" value="UniProtKB-SubCell"/>
</dbReference>
<dbReference type="GO" id="GO:0005524">
    <property type="term" value="F:ATP binding"/>
    <property type="evidence" value="ECO:0007669"/>
    <property type="project" value="UniProtKB-UniRule"/>
</dbReference>
<dbReference type="GO" id="GO:0046872">
    <property type="term" value="F:metal ion binding"/>
    <property type="evidence" value="ECO:0007669"/>
    <property type="project" value="UniProtKB-KW"/>
</dbReference>
<dbReference type="GO" id="GO:0004594">
    <property type="term" value="F:pantothenate kinase activity"/>
    <property type="evidence" value="ECO:0007669"/>
    <property type="project" value="UniProtKB-UniRule"/>
</dbReference>
<dbReference type="GO" id="GO:0015937">
    <property type="term" value="P:coenzyme A biosynthetic process"/>
    <property type="evidence" value="ECO:0007669"/>
    <property type="project" value="UniProtKB-UniRule"/>
</dbReference>
<dbReference type="CDD" id="cd24015">
    <property type="entry name" value="ASKHA_NBD_PanK-III"/>
    <property type="match status" value="1"/>
</dbReference>
<dbReference type="Gene3D" id="3.30.420.40">
    <property type="match status" value="2"/>
</dbReference>
<dbReference type="HAMAP" id="MF_01274">
    <property type="entry name" value="Pantothen_kinase_3"/>
    <property type="match status" value="1"/>
</dbReference>
<dbReference type="InterPro" id="IPR043129">
    <property type="entry name" value="ATPase_NBD"/>
</dbReference>
<dbReference type="InterPro" id="IPR004619">
    <property type="entry name" value="Type_III_PanK"/>
</dbReference>
<dbReference type="NCBIfam" id="TIGR00671">
    <property type="entry name" value="baf"/>
    <property type="match status" value="1"/>
</dbReference>
<dbReference type="NCBIfam" id="NF009847">
    <property type="entry name" value="PRK13318.1-5"/>
    <property type="match status" value="1"/>
</dbReference>
<dbReference type="NCBIfam" id="NF009848">
    <property type="entry name" value="PRK13318.1-6"/>
    <property type="match status" value="1"/>
</dbReference>
<dbReference type="NCBIfam" id="NF009855">
    <property type="entry name" value="PRK13321.1"/>
    <property type="match status" value="1"/>
</dbReference>
<dbReference type="PANTHER" id="PTHR34265">
    <property type="entry name" value="TYPE III PANTOTHENATE KINASE"/>
    <property type="match status" value="1"/>
</dbReference>
<dbReference type="PANTHER" id="PTHR34265:SF1">
    <property type="entry name" value="TYPE III PANTOTHENATE KINASE"/>
    <property type="match status" value="1"/>
</dbReference>
<dbReference type="Pfam" id="PF03309">
    <property type="entry name" value="Pan_kinase"/>
    <property type="match status" value="1"/>
</dbReference>
<dbReference type="SUPFAM" id="SSF53067">
    <property type="entry name" value="Actin-like ATPase domain"/>
    <property type="match status" value="2"/>
</dbReference>
<gene>
    <name evidence="1" type="primary">coaX</name>
    <name type="ordered locus">CLH_0167</name>
</gene>
<name>COAX_CLOBA</name>
<evidence type="ECO:0000255" key="1">
    <source>
        <dbReference type="HAMAP-Rule" id="MF_01274"/>
    </source>
</evidence>
<reference key="1">
    <citation type="submission" date="2008-05" db="EMBL/GenBank/DDBJ databases">
        <title>Complete genome sequence of Clostridium botulinum E3 str. Alaska E43.</title>
        <authorList>
            <person name="Brinkac L.M."/>
            <person name="Brown J.L."/>
            <person name="Bruce D."/>
            <person name="Detter C."/>
            <person name="Munk C."/>
            <person name="Smith L.A."/>
            <person name="Smith T.J."/>
            <person name="Sutton G."/>
            <person name="Brettin T.S."/>
        </authorList>
    </citation>
    <scope>NUCLEOTIDE SEQUENCE [LARGE SCALE GENOMIC DNA]</scope>
    <source>
        <strain>Alaska E43 / Type E3</strain>
    </source>
</reference>
<feature type="chain" id="PRO_1000140233" description="Type III pantothenate kinase">
    <location>
        <begin position="1"/>
        <end position="257"/>
    </location>
</feature>
<feature type="active site" description="Proton acceptor" evidence="1">
    <location>
        <position position="109"/>
    </location>
</feature>
<feature type="binding site" evidence="1">
    <location>
        <begin position="6"/>
        <end position="13"/>
    </location>
    <ligand>
        <name>ATP</name>
        <dbReference type="ChEBI" id="CHEBI:30616"/>
    </ligand>
</feature>
<feature type="binding site" evidence="1">
    <location>
        <position position="100"/>
    </location>
    <ligand>
        <name>substrate</name>
    </ligand>
</feature>
<feature type="binding site" evidence="1">
    <location>
        <begin position="107"/>
        <end position="110"/>
    </location>
    <ligand>
        <name>substrate</name>
    </ligand>
</feature>
<feature type="binding site" evidence="1">
    <location>
        <position position="129"/>
    </location>
    <ligand>
        <name>K(+)</name>
        <dbReference type="ChEBI" id="CHEBI:29103"/>
    </ligand>
</feature>
<feature type="binding site" evidence="1">
    <location>
        <position position="132"/>
    </location>
    <ligand>
        <name>ATP</name>
        <dbReference type="ChEBI" id="CHEBI:30616"/>
    </ligand>
</feature>
<feature type="binding site" evidence="1">
    <location>
        <position position="184"/>
    </location>
    <ligand>
        <name>substrate</name>
    </ligand>
</feature>
<proteinExistence type="inferred from homology"/>
<organism>
    <name type="scientific">Clostridium botulinum (strain Alaska E43 / Type E3)</name>
    <dbReference type="NCBI Taxonomy" id="508767"/>
    <lineage>
        <taxon>Bacteria</taxon>
        <taxon>Bacillati</taxon>
        <taxon>Bacillota</taxon>
        <taxon>Clostridia</taxon>
        <taxon>Eubacteriales</taxon>
        <taxon>Clostridiaceae</taxon>
        <taxon>Clostridium</taxon>
    </lineage>
</organism>
<sequence>MILLVDAGNTNIVLGVYKDKKYIASWRISTEGNKTSDEYSIQIMQLLNLNNLNPEDVKGIIVSSVVPNIMHSLENMLRRCFGQEPIIVGPGIKTGINIKYDNPKEVGADRIVNAVAAFEIYKRPVIIIDFGTATTFCSVTENGDYLGGCICPGLRISADALFEKAAKLPRVELEVPRKVICKNTVSSIQSGVLFGYIGQVEYIVKKMKEEMNDGIEPYVIATGGLANLIANETDAIDKVDSDLTLEGLKILYKKNRE</sequence>